<proteinExistence type="inferred from homology"/>
<feature type="chain" id="PRO_0000231247" description="UDP-N-acetylglucosamine 1-carboxyvinyltransferase">
    <location>
        <begin position="1"/>
        <end position="421"/>
    </location>
</feature>
<feature type="active site" description="Proton donor" evidence="1">
    <location>
        <position position="117"/>
    </location>
</feature>
<feature type="binding site" evidence="1">
    <location>
        <begin position="22"/>
        <end position="23"/>
    </location>
    <ligand>
        <name>phosphoenolpyruvate</name>
        <dbReference type="ChEBI" id="CHEBI:58702"/>
    </ligand>
</feature>
<feature type="binding site" evidence="1">
    <location>
        <position position="93"/>
    </location>
    <ligand>
        <name>UDP-N-acetyl-alpha-D-glucosamine</name>
        <dbReference type="ChEBI" id="CHEBI:57705"/>
    </ligand>
</feature>
<feature type="binding site" evidence="1">
    <location>
        <begin position="122"/>
        <end position="126"/>
    </location>
    <ligand>
        <name>UDP-N-acetyl-alpha-D-glucosamine</name>
        <dbReference type="ChEBI" id="CHEBI:57705"/>
    </ligand>
</feature>
<feature type="binding site" evidence="1">
    <location>
        <position position="308"/>
    </location>
    <ligand>
        <name>UDP-N-acetyl-alpha-D-glucosamine</name>
        <dbReference type="ChEBI" id="CHEBI:57705"/>
    </ligand>
</feature>
<feature type="binding site" evidence="1">
    <location>
        <position position="330"/>
    </location>
    <ligand>
        <name>UDP-N-acetyl-alpha-D-glucosamine</name>
        <dbReference type="ChEBI" id="CHEBI:57705"/>
    </ligand>
</feature>
<feature type="modified residue" description="2-(S-cysteinyl)pyruvic acid O-phosphothioketal" evidence="1">
    <location>
        <position position="117"/>
    </location>
</feature>
<protein>
    <recommendedName>
        <fullName evidence="1">UDP-N-acetylglucosamine 1-carboxyvinyltransferase</fullName>
        <ecNumber evidence="1">2.5.1.7</ecNumber>
    </recommendedName>
    <alternativeName>
        <fullName evidence="1">Enoylpyruvate transferase</fullName>
    </alternativeName>
    <alternativeName>
        <fullName evidence="1">UDP-N-acetylglucosamine enolpyruvyl transferase</fullName>
        <shortName evidence="1">EPT</shortName>
    </alternativeName>
</protein>
<comment type="function">
    <text evidence="1">Cell wall formation. Adds enolpyruvyl to UDP-N-acetylglucosamine.</text>
</comment>
<comment type="catalytic activity">
    <reaction evidence="1">
        <text>phosphoenolpyruvate + UDP-N-acetyl-alpha-D-glucosamine = UDP-N-acetyl-3-O-(1-carboxyvinyl)-alpha-D-glucosamine + phosphate</text>
        <dbReference type="Rhea" id="RHEA:18681"/>
        <dbReference type="ChEBI" id="CHEBI:43474"/>
        <dbReference type="ChEBI" id="CHEBI:57705"/>
        <dbReference type="ChEBI" id="CHEBI:58702"/>
        <dbReference type="ChEBI" id="CHEBI:68483"/>
        <dbReference type="EC" id="2.5.1.7"/>
    </reaction>
</comment>
<comment type="pathway">
    <text evidence="1">Cell wall biogenesis; peptidoglycan biosynthesis.</text>
</comment>
<comment type="subcellular location">
    <subcellularLocation>
        <location evidence="1">Cytoplasm</location>
    </subcellularLocation>
</comment>
<comment type="similarity">
    <text evidence="1">Belongs to the EPSP synthase family. MurA subfamily.</text>
</comment>
<gene>
    <name evidence="1" type="primary">murA</name>
    <name type="ordered locus">PFL_0927</name>
</gene>
<evidence type="ECO:0000255" key="1">
    <source>
        <dbReference type="HAMAP-Rule" id="MF_00111"/>
    </source>
</evidence>
<accession>Q4KI75</accession>
<keyword id="KW-0131">Cell cycle</keyword>
<keyword id="KW-0132">Cell division</keyword>
<keyword id="KW-0133">Cell shape</keyword>
<keyword id="KW-0961">Cell wall biogenesis/degradation</keyword>
<keyword id="KW-0963">Cytoplasm</keyword>
<keyword id="KW-0573">Peptidoglycan synthesis</keyword>
<keyword id="KW-0670">Pyruvate</keyword>
<keyword id="KW-0808">Transferase</keyword>
<organism>
    <name type="scientific">Pseudomonas fluorescens (strain ATCC BAA-477 / NRRL B-23932 / Pf-5)</name>
    <dbReference type="NCBI Taxonomy" id="220664"/>
    <lineage>
        <taxon>Bacteria</taxon>
        <taxon>Pseudomonadati</taxon>
        <taxon>Pseudomonadota</taxon>
        <taxon>Gammaproteobacteria</taxon>
        <taxon>Pseudomonadales</taxon>
        <taxon>Pseudomonadaceae</taxon>
        <taxon>Pseudomonas</taxon>
    </lineage>
</organism>
<reference key="1">
    <citation type="journal article" date="2005" name="Nat. Biotechnol.">
        <title>Complete genome sequence of the plant commensal Pseudomonas fluorescens Pf-5.</title>
        <authorList>
            <person name="Paulsen I.T."/>
            <person name="Press C.M."/>
            <person name="Ravel J."/>
            <person name="Kobayashi D.Y."/>
            <person name="Myers G.S.A."/>
            <person name="Mavrodi D.V."/>
            <person name="DeBoy R.T."/>
            <person name="Seshadri R."/>
            <person name="Ren Q."/>
            <person name="Madupu R."/>
            <person name="Dodson R.J."/>
            <person name="Durkin A.S."/>
            <person name="Brinkac L.M."/>
            <person name="Daugherty S.C."/>
            <person name="Sullivan S.A."/>
            <person name="Rosovitz M.J."/>
            <person name="Gwinn M.L."/>
            <person name="Zhou L."/>
            <person name="Schneider D.J."/>
            <person name="Cartinhour S.W."/>
            <person name="Nelson W.C."/>
            <person name="Weidman J."/>
            <person name="Watkins K."/>
            <person name="Tran K."/>
            <person name="Khouri H."/>
            <person name="Pierson E.A."/>
            <person name="Pierson L.S. III"/>
            <person name="Thomashow L.S."/>
            <person name="Loper J.E."/>
        </authorList>
    </citation>
    <scope>NUCLEOTIDE SEQUENCE [LARGE SCALE GENOMIC DNA]</scope>
    <source>
        <strain>ATCC BAA-477 / NRRL B-23932 / Pf-5</strain>
    </source>
</reference>
<name>MURA_PSEF5</name>
<dbReference type="EC" id="2.5.1.7" evidence="1"/>
<dbReference type="EMBL" id="CP000076">
    <property type="protein sequence ID" value="AAY90214.1"/>
    <property type="molecule type" value="Genomic_DNA"/>
</dbReference>
<dbReference type="RefSeq" id="WP_011059281.1">
    <property type="nucleotide sequence ID" value="NC_004129.6"/>
</dbReference>
<dbReference type="SMR" id="Q4KI75"/>
<dbReference type="STRING" id="220664.PFL_0927"/>
<dbReference type="GeneID" id="57473930"/>
<dbReference type="KEGG" id="pfl:PFL_0927"/>
<dbReference type="eggNOG" id="COG0766">
    <property type="taxonomic scope" value="Bacteria"/>
</dbReference>
<dbReference type="HOGENOM" id="CLU_027387_0_0_6"/>
<dbReference type="UniPathway" id="UPA00219"/>
<dbReference type="Proteomes" id="UP000008540">
    <property type="component" value="Chromosome"/>
</dbReference>
<dbReference type="GO" id="GO:0005737">
    <property type="term" value="C:cytoplasm"/>
    <property type="evidence" value="ECO:0007669"/>
    <property type="project" value="UniProtKB-SubCell"/>
</dbReference>
<dbReference type="GO" id="GO:0008760">
    <property type="term" value="F:UDP-N-acetylglucosamine 1-carboxyvinyltransferase activity"/>
    <property type="evidence" value="ECO:0007669"/>
    <property type="project" value="UniProtKB-UniRule"/>
</dbReference>
<dbReference type="GO" id="GO:0051301">
    <property type="term" value="P:cell division"/>
    <property type="evidence" value="ECO:0007669"/>
    <property type="project" value="UniProtKB-KW"/>
</dbReference>
<dbReference type="GO" id="GO:0071555">
    <property type="term" value="P:cell wall organization"/>
    <property type="evidence" value="ECO:0007669"/>
    <property type="project" value="UniProtKB-KW"/>
</dbReference>
<dbReference type="GO" id="GO:0009252">
    <property type="term" value="P:peptidoglycan biosynthetic process"/>
    <property type="evidence" value="ECO:0007669"/>
    <property type="project" value="UniProtKB-UniRule"/>
</dbReference>
<dbReference type="GO" id="GO:0008360">
    <property type="term" value="P:regulation of cell shape"/>
    <property type="evidence" value="ECO:0007669"/>
    <property type="project" value="UniProtKB-KW"/>
</dbReference>
<dbReference type="GO" id="GO:0019277">
    <property type="term" value="P:UDP-N-acetylgalactosamine biosynthetic process"/>
    <property type="evidence" value="ECO:0007669"/>
    <property type="project" value="InterPro"/>
</dbReference>
<dbReference type="CDD" id="cd01555">
    <property type="entry name" value="UdpNAET"/>
    <property type="match status" value="1"/>
</dbReference>
<dbReference type="FunFam" id="3.65.10.10:FF:000002">
    <property type="entry name" value="UDP-N-acetylglucosamine 1-carboxyvinyltransferase"/>
    <property type="match status" value="1"/>
</dbReference>
<dbReference type="Gene3D" id="3.65.10.10">
    <property type="entry name" value="Enolpyruvate transferase domain"/>
    <property type="match status" value="2"/>
</dbReference>
<dbReference type="HAMAP" id="MF_00111">
    <property type="entry name" value="MurA"/>
    <property type="match status" value="1"/>
</dbReference>
<dbReference type="InterPro" id="IPR001986">
    <property type="entry name" value="Enolpyruvate_Tfrase_dom"/>
</dbReference>
<dbReference type="InterPro" id="IPR036968">
    <property type="entry name" value="Enolpyruvate_Tfrase_sf"/>
</dbReference>
<dbReference type="InterPro" id="IPR050068">
    <property type="entry name" value="MurA_subfamily"/>
</dbReference>
<dbReference type="InterPro" id="IPR013792">
    <property type="entry name" value="RNA3'P_cycl/enolpyr_Trfase_a/b"/>
</dbReference>
<dbReference type="InterPro" id="IPR005750">
    <property type="entry name" value="UDP_GlcNAc_COvinyl_MurA"/>
</dbReference>
<dbReference type="NCBIfam" id="TIGR01072">
    <property type="entry name" value="murA"/>
    <property type="match status" value="1"/>
</dbReference>
<dbReference type="NCBIfam" id="NF006873">
    <property type="entry name" value="PRK09369.1"/>
    <property type="match status" value="1"/>
</dbReference>
<dbReference type="PANTHER" id="PTHR43783">
    <property type="entry name" value="UDP-N-ACETYLGLUCOSAMINE 1-CARBOXYVINYLTRANSFERASE"/>
    <property type="match status" value="1"/>
</dbReference>
<dbReference type="PANTHER" id="PTHR43783:SF1">
    <property type="entry name" value="UDP-N-ACETYLGLUCOSAMINE 1-CARBOXYVINYLTRANSFERASE"/>
    <property type="match status" value="1"/>
</dbReference>
<dbReference type="Pfam" id="PF00275">
    <property type="entry name" value="EPSP_synthase"/>
    <property type="match status" value="1"/>
</dbReference>
<dbReference type="SUPFAM" id="SSF55205">
    <property type="entry name" value="EPT/RTPC-like"/>
    <property type="match status" value="1"/>
</dbReference>
<sequence length="421" mass="44993">MDKLIITGGVRLDGEIRISGAKNSALPILAATLLCDGPVTVANLPHLHDITTMIELFGRMGIEPVIDEKLSVEIDPRTIKTLVAPYELVKTMRASILVLGPMVARFGEAEVALPGGCAIGSRPVDLHIRGLEAMGAVIDVEGGYIKAKAPEGGLRGANFFFDTVSVTGTENIMMAAALARGRSVLQNAAREPEVVDLANFLIAMGAKISGAGTDTITIDGVERLHSAIYKVMPDRIETGTYLVAAAVTGGRVKVKDTDPTILEAVLEKLKEAGAEVTTGSDWIELNMHGKRPKAVNVRTAPYPAFPTDMQAQFISLNAIAEGTGAVIETIFENRFMHVYELHRMGAKIQVEGNTAIVTGTEILKGAPVMATDLRASASLVISALMAEGDTLIDRIYHIDRGYECIEEKLQMLGAKIRRVPG</sequence>